<name>YLX8_CAEEL</name>
<dbReference type="EMBL" id="FO081210">
    <property type="protein sequence ID" value="CCD69927.1"/>
    <property type="molecule type" value="Genomic_DNA"/>
</dbReference>
<dbReference type="PIR" id="G88484">
    <property type="entry name" value="G88484"/>
</dbReference>
<dbReference type="PIR" id="H88484">
    <property type="entry name" value="H88484"/>
</dbReference>
<dbReference type="SMR" id="P46504"/>
<dbReference type="FunCoup" id="P46504">
    <property type="interactions" value="65"/>
</dbReference>
<dbReference type="STRING" id="6239.F23F12.8.1"/>
<dbReference type="PaxDb" id="6239-F23F12.8"/>
<dbReference type="EnsemblMetazoa" id="F23F12.8.1">
    <property type="protein sequence ID" value="F23F12.8.1"/>
    <property type="gene ID" value="WBGene00017754"/>
</dbReference>
<dbReference type="KEGG" id="cel:CELE_F23F12.8"/>
<dbReference type="UCSC" id="F23F12.8">
    <property type="organism name" value="c. elegans"/>
</dbReference>
<dbReference type="AGR" id="WB:WBGene00017754"/>
<dbReference type="CTD" id="184907"/>
<dbReference type="WormBase" id="F23F12.8">
    <property type="protein sequence ID" value="CE38952"/>
    <property type="gene ID" value="WBGene00017754"/>
    <property type="gene designation" value="chtb-2"/>
</dbReference>
<dbReference type="eggNOG" id="ENOG502QSSK">
    <property type="taxonomic scope" value="Eukaryota"/>
</dbReference>
<dbReference type="HOGENOM" id="CLU_305288_0_0_1"/>
<dbReference type="InParanoid" id="P46504"/>
<dbReference type="OMA" id="RWQGNRE"/>
<dbReference type="OrthoDB" id="5861391at2759"/>
<dbReference type="PRO" id="PR:P46504"/>
<dbReference type="Proteomes" id="UP000001940">
    <property type="component" value="Chromosome III"/>
</dbReference>
<dbReference type="Bgee" id="WBGene00017754">
    <property type="expression patterns" value="Expressed in pharyngeal muscle cell (C elegans) and 3 other cell types or tissues"/>
</dbReference>
<dbReference type="PANTHER" id="PTHR18916">
    <property type="entry name" value="DYNACTIN 1-RELATED MICROTUBULE-BINDING"/>
    <property type="match status" value="1"/>
</dbReference>
<dbReference type="PANTHER" id="PTHR18916:SF93">
    <property type="entry name" value="RESTIN HOMOLOG"/>
    <property type="match status" value="1"/>
</dbReference>
<dbReference type="Pfam" id="PF17380">
    <property type="entry name" value="DUF5401"/>
    <property type="match status" value="1"/>
</dbReference>
<keyword id="KW-0325">Glycoprotein</keyword>
<keyword id="KW-1185">Reference proteome</keyword>
<keyword id="KW-0732">Signal</keyword>
<evidence type="ECO:0000255" key="1"/>
<evidence type="ECO:0000256" key="2">
    <source>
        <dbReference type="SAM" id="MobiDB-lite"/>
    </source>
</evidence>
<evidence type="ECO:0000305" key="3"/>
<evidence type="ECO:0000312" key="4">
    <source>
        <dbReference type="WormBase" id="F23F12.8"/>
    </source>
</evidence>
<proteinExistence type="inferred from homology"/>
<protein>
    <recommendedName>
        <fullName evidence="3">Chitin binding domain containing chtb-2</fullName>
    </recommendedName>
</protein>
<sequence>MRTMHCFLFILLFCLGQVFTDVIFTSERCNRVTYGLRTVNGDPSRYKQCGPSGRVWIVPCAPQMTFDPEDRVCKERLDSRIVKPMRKYETSRTIITTPAPIPSSYPVSAEVIAPGAPAASHAAPEEFVFSTIRPKSRKPKAKTRGKFRKTTTAMIQTTTPMTVESFESMEMTTTPKIVIFASKKNMNNTNRSGESRTQLIRNRNRERGNAPAFTRPGRVRTTTPMSVTHATRFVPGIQHKVTVAPKEVQGMPHTLAPYEKMDRRPDSFGVEELTTMTPEYTVRYNGQTMTENEFLNQLLHIVQHQKTVSERQQQEKFEKMEQERLRQEKEEKARELERRRKLEESETARQAELDRQATIYAEQERMAMERNRELERIRLEEKKRENERVRQEEIAMEISKIRELERLQLERQRKNERVRQELEAARKYKLQEEERQRKIQQQKVEMEQIRQQEEARQEQLRVLEEERARELERVRQEELERQHQMEILRQQEEDQKKKKLEKDREQREQQEAEELNRMIIEKEMKENKQKMIEEKNKRKMLEKEMEDRQNAIYEEEERRIAEEERRKQIEIEERRRIQQQIMIATEERSRLDAMEREREMLRQIKESEKQRKELERQELLATTPITTIKPIYRPDISEYRPPDVESHMIRFTTQSPEWATPSPTWNPAWNTVTAEEETPGIPIIHSQCQVNGECELKYDVDSFCAHPRSPSMYLQCAPLYGRLGRWTERYCPDTLIFIVSIGRCEKGEETRKPYDPDNRVVIPRLPSETSFVEWKGNRVIDHQLPTHISPPRVYPPVPETHQPQIYSTIDQFPKDLLPKIPELATAEKTYAQQYQNHIHGSVVSGGHNHQVVRPIAPTPTIAPNSNVPVSYQISQSQNSLSTNSIKSEIDLSHIHPLFPRVQPDFLSRMLPSLNFKMHDENSGAQSLGSVVKPVLKKIALNQTEQFLDRLLADQKNDEKLRKETIDRLKSSNSDNITKKN</sequence>
<feature type="signal peptide" evidence="1">
    <location>
        <begin position="1"/>
        <end position="20"/>
    </location>
</feature>
<feature type="chain" id="PRO_0000014281" description="Chitin binding domain containing chtb-2">
    <location>
        <begin position="21"/>
        <end position="980"/>
    </location>
</feature>
<feature type="region of interest" description="Disordered" evidence="2">
    <location>
        <begin position="310"/>
        <end position="354"/>
    </location>
</feature>
<feature type="region of interest" description="Disordered" evidence="2">
    <location>
        <begin position="431"/>
        <end position="451"/>
    </location>
</feature>
<feature type="region of interest" description="Disordered" evidence="2">
    <location>
        <begin position="486"/>
        <end position="512"/>
    </location>
</feature>
<feature type="glycosylation site" description="N-linked (GlcNAc...) asparagine" evidence="1">
    <location>
        <position position="187"/>
    </location>
</feature>
<feature type="glycosylation site" description="N-linked (GlcNAc...) asparagine" evidence="1">
    <location>
        <position position="190"/>
    </location>
</feature>
<feature type="glycosylation site" description="N-linked (GlcNAc...) asparagine" evidence="1">
    <location>
        <position position="941"/>
    </location>
</feature>
<feature type="glycosylation site" description="N-linked (GlcNAc...) asparagine" evidence="1">
    <location>
        <position position="975"/>
    </location>
</feature>
<organism>
    <name type="scientific">Caenorhabditis elegans</name>
    <dbReference type="NCBI Taxonomy" id="6239"/>
    <lineage>
        <taxon>Eukaryota</taxon>
        <taxon>Metazoa</taxon>
        <taxon>Ecdysozoa</taxon>
        <taxon>Nematoda</taxon>
        <taxon>Chromadorea</taxon>
        <taxon>Rhabditida</taxon>
        <taxon>Rhabditina</taxon>
        <taxon>Rhabditomorpha</taxon>
        <taxon>Rhabditoidea</taxon>
        <taxon>Rhabditidae</taxon>
        <taxon>Peloderinae</taxon>
        <taxon>Caenorhabditis</taxon>
    </lineage>
</organism>
<accession>P46504</accession>
<accession>P46503</accession>
<accession>Q45EL6</accession>
<reference key="1">
    <citation type="journal article" date="1998" name="Science">
        <title>Genome sequence of the nematode C. elegans: a platform for investigating biology.</title>
        <authorList>
            <consortium name="The C. elegans sequencing consortium"/>
        </authorList>
    </citation>
    <scope>NUCLEOTIDE SEQUENCE [LARGE SCALE GENOMIC DNA]</scope>
    <source>
        <strain>Bristol N2</strain>
    </source>
</reference>
<gene>
    <name evidence="4" type="primary">chtb-2</name>
    <name evidence="4" type="ORF">F23F12.8</name>
</gene>